<comment type="function">
    <text evidence="1">Negative regulator of class I heat shock genes (grpE-dnaK-dnaJ and groELS operons). Prevents heat-shock induction of these operons.</text>
</comment>
<comment type="similarity">
    <text evidence="1">Belongs to the HrcA family.</text>
</comment>
<proteinExistence type="inferred from homology"/>
<gene>
    <name evidence="1" type="primary">hrcA</name>
    <name type="ordered locus">jhp_0103</name>
</gene>
<keyword id="KW-0678">Repressor</keyword>
<keyword id="KW-0346">Stress response</keyword>
<keyword id="KW-0804">Transcription</keyword>
<keyword id="KW-0805">Transcription regulation</keyword>
<protein>
    <recommendedName>
        <fullName evidence="1">Heat-inducible transcription repressor HrcA</fullName>
    </recommendedName>
</protein>
<sequence>MLKRIKVGSDLNKKESLLDAFVKTYLQTLEPISSKRLKELANLKVSCATIRNYFQILSKEGMLHQAHSSGARLPTFKAFENYWHKSLRFEVLKVNEKRLKSASENFGLFTLLKKPSLERLERVIECEKRFLILDFLAFSCAVGYSVKMEKFLLELVGRSVKEVRLIAASVNALSLARQLERLEYSSAQITRFNLMGLKTLLNSPLFFDILEGKVLERFKKGLHFIEPDCMLVTRPIEFQNERMQLLCVGKLECDYEGFFQTISKEE</sequence>
<evidence type="ECO:0000255" key="1">
    <source>
        <dbReference type="HAMAP-Rule" id="MF_00081"/>
    </source>
</evidence>
<feature type="chain" id="PRO_0000182484" description="Heat-inducible transcription repressor HrcA">
    <location>
        <begin position="1"/>
        <end position="266"/>
    </location>
</feature>
<reference key="1">
    <citation type="journal article" date="1999" name="Nature">
        <title>Genomic sequence comparison of two unrelated isolates of the human gastric pathogen Helicobacter pylori.</title>
        <authorList>
            <person name="Alm R.A."/>
            <person name="Ling L.-S.L."/>
            <person name="Moir D.T."/>
            <person name="King B.L."/>
            <person name="Brown E.D."/>
            <person name="Doig P.C."/>
            <person name="Smith D.R."/>
            <person name="Noonan B."/>
            <person name="Guild B.C."/>
            <person name="deJonge B.L."/>
            <person name="Carmel G."/>
            <person name="Tummino P.J."/>
            <person name="Caruso A."/>
            <person name="Uria-Nickelsen M."/>
            <person name="Mills D.M."/>
            <person name="Ives C."/>
            <person name="Gibson R."/>
            <person name="Merberg D."/>
            <person name="Mills S.D."/>
            <person name="Jiang Q."/>
            <person name="Taylor D.E."/>
            <person name="Vovis G.F."/>
            <person name="Trust T.J."/>
        </authorList>
    </citation>
    <scope>NUCLEOTIDE SEQUENCE [LARGE SCALE GENOMIC DNA]</scope>
    <source>
        <strain>J99 / ATCC 700824</strain>
    </source>
</reference>
<organism>
    <name type="scientific">Helicobacter pylori (strain J99 / ATCC 700824)</name>
    <name type="common">Campylobacter pylori J99</name>
    <dbReference type="NCBI Taxonomy" id="85963"/>
    <lineage>
        <taxon>Bacteria</taxon>
        <taxon>Pseudomonadati</taxon>
        <taxon>Campylobacterota</taxon>
        <taxon>Epsilonproteobacteria</taxon>
        <taxon>Campylobacterales</taxon>
        <taxon>Helicobacteraceae</taxon>
        <taxon>Helicobacter</taxon>
    </lineage>
</organism>
<name>HRCA_HELPJ</name>
<accession>Q9ZMW2</accession>
<dbReference type="EMBL" id="AE001439">
    <property type="protein sequence ID" value="AAD05682.1"/>
    <property type="molecule type" value="Genomic_DNA"/>
</dbReference>
<dbReference type="PIR" id="A71974">
    <property type="entry name" value="A71974"/>
</dbReference>
<dbReference type="RefSeq" id="WP_000919598.1">
    <property type="nucleotide sequence ID" value="NC_000921.1"/>
</dbReference>
<dbReference type="SMR" id="Q9ZMW2"/>
<dbReference type="KEGG" id="hpj:jhp_0103"/>
<dbReference type="PATRIC" id="fig|85963.30.peg.925"/>
<dbReference type="eggNOG" id="COG1420">
    <property type="taxonomic scope" value="Bacteria"/>
</dbReference>
<dbReference type="Proteomes" id="UP000000804">
    <property type="component" value="Chromosome"/>
</dbReference>
<dbReference type="GO" id="GO:0003677">
    <property type="term" value="F:DNA binding"/>
    <property type="evidence" value="ECO:0007669"/>
    <property type="project" value="InterPro"/>
</dbReference>
<dbReference type="GO" id="GO:0045892">
    <property type="term" value="P:negative regulation of DNA-templated transcription"/>
    <property type="evidence" value="ECO:0007669"/>
    <property type="project" value="UniProtKB-UniRule"/>
</dbReference>
<dbReference type="FunFam" id="1.10.10.10:FF:000785">
    <property type="entry name" value="Heat-inducible transcription repressor HrcA"/>
    <property type="match status" value="1"/>
</dbReference>
<dbReference type="Gene3D" id="1.10.10.10">
    <property type="entry name" value="Winged helix-like DNA-binding domain superfamily/Winged helix DNA-binding domain"/>
    <property type="match status" value="1"/>
</dbReference>
<dbReference type="HAMAP" id="MF_00081">
    <property type="entry name" value="HrcA"/>
    <property type="match status" value="1"/>
</dbReference>
<dbReference type="InterPro" id="IPR002571">
    <property type="entry name" value="HrcA"/>
</dbReference>
<dbReference type="InterPro" id="IPR036388">
    <property type="entry name" value="WH-like_DNA-bd_sf"/>
</dbReference>
<dbReference type="InterPro" id="IPR036390">
    <property type="entry name" value="WH_DNA-bd_sf"/>
</dbReference>
<dbReference type="NCBIfam" id="NF003033">
    <property type="entry name" value="PRK03911.1"/>
    <property type="match status" value="1"/>
</dbReference>
<dbReference type="PANTHER" id="PTHR34824">
    <property type="entry name" value="HEAT-INDUCIBLE TRANSCRIPTION REPRESSOR HRCA"/>
    <property type="match status" value="1"/>
</dbReference>
<dbReference type="PANTHER" id="PTHR34824:SF1">
    <property type="entry name" value="HEAT-INDUCIBLE TRANSCRIPTION REPRESSOR HRCA"/>
    <property type="match status" value="1"/>
</dbReference>
<dbReference type="SUPFAM" id="SSF46785">
    <property type="entry name" value="Winged helix' DNA-binding domain"/>
    <property type="match status" value="1"/>
</dbReference>